<reference key="1">
    <citation type="journal article" date="1987" name="Genes Dev.">
        <title>Ultrabithorax mutations in constant and variable regions of the protein coding sequence.</title>
        <authorList>
            <person name="Weinzierl R."/>
            <person name="Axton J.M."/>
            <person name="Ghysen A."/>
            <person name="Akam M."/>
        </authorList>
    </citation>
    <scope>NUCLEOTIDE SEQUENCE [GENOMIC DNA]</scope>
    <source>
        <strain>Canton-S</strain>
    </source>
</reference>
<reference key="2">
    <citation type="journal article" date="1989" name="Genes Dev.">
        <title>Structure and expression of a family of Ultrabithorax mRNAs generated by alternative splicing and polyadenylation in Drosophila.</title>
        <authorList>
            <person name="Kornfeld K."/>
            <person name="Saint R.B."/>
            <person name="Beachy P.A."/>
            <person name="Harte P.J."/>
            <person name="Peattie D.A."/>
            <person name="Hogness D.S."/>
        </authorList>
    </citation>
    <scope>NUCLEOTIDE SEQUENCE [MRNA] (ISOFORMS IA; IB; IIA; IIB; IVA AND IVB)</scope>
</reference>
<reference key="3">
    <citation type="journal article" date="1995" name="Proc. Natl. Acad. Sci. U.S.A.">
        <title>Complete sequence of the bithorax complex of Drosophila.</title>
        <authorList>
            <person name="Martin C.H."/>
            <person name="Mayeda C.A."/>
            <person name="Davis C.A."/>
            <person name="Ericsson C.L."/>
            <person name="Knafels J.D."/>
            <person name="Mathog D.R."/>
            <person name="Celniker S.E."/>
            <person name="Lewis E.B."/>
            <person name="Palazzolo M.J."/>
        </authorList>
    </citation>
    <scope>NUCLEOTIDE SEQUENCE [GENOMIC DNA] (ISOFORMS IA; IB; IIA; IIB AND IVA)</scope>
    <source>
        <strain>Canton-S</strain>
    </source>
</reference>
<reference key="4">
    <citation type="journal article" date="2000" name="Science">
        <title>The genome sequence of Drosophila melanogaster.</title>
        <authorList>
            <person name="Adams M.D."/>
            <person name="Celniker S.E."/>
            <person name="Holt R.A."/>
            <person name="Evans C.A."/>
            <person name="Gocayne J.D."/>
            <person name="Amanatides P.G."/>
            <person name="Scherer S.E."/>
            <person name="Li P.W."/>
            <person name="Hoskins R.A."/>
            <person name="Galle R.F."/>
            <person name="George R.A."/>
            <person name="Lewis S.E."/>
            <person name="Richards S."/>
            <person name="Ashburner M."/>
            <person name="Henderson S.N."/>
            <person name="Sutton G.G."/>
            <person name="Wortman J.R."/>
            <person name="Yandell M.D."/>
            <person name="Zhang Q."/>
            <person name="Chen L.X."/>
            <person name="Brandon R.C."/>
            <person name="Rogers Y.-H.C."/>
            <person name="Blazej R.G."/>
            <person name="Champe M."/>
            <person name="Pfeiffer B.D."/>
            <person name="Wan K.H."/>
            <person name="Doyle C."/>
            <person name="Baxter E.G."/>
            <person name="Helt G."/>
            <person name="Nelson C.R."/>
            <person name="Miklos G.L.G."/>
            <person name="Abril J.F."/>
            <person name="Agbayani A."/>
            <person name="An H.-J."/>
            <person name="Andrews-Pfannkoch C."/>
            <person name="Baldwin D."/>
            <person name="Ballew R.M."/>
            <person name="Basu A."/>
            <person name="Baxendale J."/>
            <person name="Bayraktaroglu L."/>
            <person name="Beasley E.M."/>
            <person name="Beeson K.Y."/>
            <person name="Benos P.V."/>
            <person name="Berman B.P."/>
            <person name="Bhandari D."/>
            <person name="Bolshakov S."/>
            <person name="Borkova D."/>
            <person name="Botchan M.R."/>
            <person name="Bouck J."/>
            <person name="Brokstein P."/>
            <person name="Brottier P."/>
            <person name="Burtis K.C."/>
            <person name="Busam D.A."/>
            <person name="Butler H."/>
            <person name="Cadieu E."/>
            <person name="Center A."/>
            <person name="Chandra I."/>
            <person name="Cherry J.M."/>
            <person name="Cawley S."/>
            <person name="Dahlke C."/>
            <person name="Davenport L.B."/>
            <person name="Davies P."/>
            <person name="de Pablos B."/>
            <person name="Delcher A."/>
            <person name="Deng Z."/>
            <person name="Mays A.D."/>
            <person name="Dew I."/>
            <person name="Dietz S.M."/>
            <person name="Dodson K."/>
            <person name="Doup L.E."/>
            <person name="Downes M."/>
            <person name="Dugan-Rocha S."/>
            <person name="Dunkov B.C."/>
            <person name="Dunn P."/>
            <person name="Durbin K.J."/>
            <person name="Evangelista C.C."/>
            <person name="Ferraz C."/>
            <person name="Ferriera S."/>
            <person name="Fleischmann W."/>
            <person name="Fosler C."/>
            <person name="Gabrielian A.E."/>
            <person name="Garg N.S."/>
            <person name="Gelbart W.M."/>
            <person name="Glasser K."/>
            <person name="Glodek A."/>
            <person name="Gong F."/>
            <person name="Gorrell J.H."/>
            <person name="Gu Z."/>
            <person name="Guan P."/>
            <person name="Harris M."/>
            <person name="Harris N.L."/>
            <person name="Harvey D.A."/>
            <person name="Heiman T.J."/>
            <person name="Hernandez J.R."/>
            <person name="Houck J."/>
            <person name="Hostin D."/>
            <person name="Houston K.A."/>
            <person name="Howland T.J."/>
            <person name="Wei M.-H."/>
            <person name="Ibegwam C."/>
            <person name="Jalali M."/>
            <person name="Kalush F."/>
            <person name="Karpen G.H."/>
            <person name="Ke Z."/>
            <person name="Kennison J.A."/>
            <person name="Ketchum K.A."/>
            <person name="Kimmel B.E."/>
            <person name="Kodira C.D."/>
            <person name="Kraft C.L."/>
            <person name="Kravitz S."/>
            <person name="Kulp D."/>
            <person name="Lai Z."/>
            <person name="Lasko P."/>
            <person name="Lei Y."/>
            <person name="Levitsky A.A."/>
            <person name="Li J.H."/>
            <person name="Li Z."/>
            <person name="Liang Y."/>
            <person name="Lin X."/>
            <person name="Liu X."/>
            <person name="Mattei B."/>
            <person name="McIntosh T.C."/>
            <person name="McLeod M.P."/>
            <person name="McPherson D."/>
            <person name="Merkulov G."/>
            <person name="Milshina N.V."/>
            <person name="Mobarry C."/>
            <person name="Morris J."/>
            <person name="Moshrefi A."/>
            <person name="Mount S.M."/>
            <person name="Moy M."/>
            <person name="Murphy B."/>
            <person name="Murphy L."/>
            <person name="Muzny D.M."/>
            <person name="Nelson D.L."/>
            <person name="Nelson D.R."/>
            <person name="Nelson K.A."/>
            <person name="Nixon K."/>
            <person name="Nusskern D.R."/>
            <person name="Pacleb J.M."/>
            <person name="Palazzolo M."/>
            <person name="Pittman G.S."/>
            <person name="Pan S."/>
            <person name="Pollard J."/>
            <person name="Puri V."/>
            <person name="Reese M.G."/>
            <person name="Reinert K."/>
            <person name="Remington K."/>
            <person name="Saunders R.D.C."/>
            <person name="Scheeler F."/>
            <person name="Shen H."/>
            <person name="Shue B.C."/>
            <person name="Siden-Kiamos I."/>
            <person name="Simpson M."/>
            <person name="Skupski M.P."/>
            <person name="Smith T.J."/>
            <person name="Spier E."/>
            <person name="Spradling A.C."/>
            <person name="Stapleton M."/>
            <person name="Strong R."/>
            <person name="Sun E."/>
            <person name="Svirskas R."/>
            <person name="Tector C."/>
            <person name="Turner R."/>
            <person name="Venter E."/>
            <person name="Wang A.H."/>
            <person name="Wang X."/>
            <person name="Wang Z.-Y."/>
            <person name="Wassarman D.A."/>
            <person name="Weinstock G.M."/>
            <person name="Weissenbach J."/>
            <person name="Williams S.M."/>
            <person name="Woodage T."/>
            <person name="Worley K.C."/>
            <person name="Wu D."/>
            <person name="Yang S."/>
            <person name="Yao Q.A."/>
            <person name="Ye J."/>
            <person name="Yeh R.-F."/>
            <person name="Zaveri J.S."/>
            <person name="Zhan M."/>
            <person name="Zhang G."/>
            <person name="Zhao Q."/>
            <person name="Zheng L."/>
            <person name="Zheng X.H."/>
            <person name="Zhong F.N."/>
            <person name="Zhong W."/>
            <person name="Zhou X."/>
            <person name="Zhu S.C."/>
            <person name="Zhu X."/>
            <person name="Smith H.O."/>
            <person name="Gibbs R.A."/>
            <person name="Myers E.W."/>
            <person name="Rubin G.M."/>
            <person name="Venter J.C."/>
        </authorList>
    </citation>
    <scope>NUCLEOTIDE SEQUENCE [LARGE SCALE GENOMIC DNA]</scope>
    <source>
        <strain>Berkeley</strain>
    </source>
</reference>
<reference key="5">
    <citation type="journal article" date="2002" name="Genome Biol.">
        <title>Annotation of the Drosophila melanogaster euchromatic genome: a systematic review.</title>
        <authorList>
            <person name="Misra S."/>
            <person name="Crosby M.A."/>
            <person name="Mungall C.J."/>
            <person name="Matthews B.B."/>
            <person name="Campbell K.S."/>
            <person name="Hradecky P."/>
            <person name="Huang Y."/>
            <person name="Kaminker J.S."/>
            <person name="Millburn G.H."/>
            <person name="Prochnik S.E."/>
            <person name="Smith C.D."/>
            <person name="Tupy J.L."/>
            <person name="Whitfield E.J."/>
            <person name="Bayraktaroglu L."/>
            <person name="Berman B.P."/>
            <person name="Bettencourt B.R."/>
            <person name="Celniker S.E."/>
            <person name="de Grey A.D.N.J."/>
            <person name="Drysdale R.A."/>
            <person name="Harris N.L."/>
            <person name="Richter J."/>
            <person name="Russo S."/>
            <person name="Schroeder A.J."/>
            <person name="Shu S.Q."/>
            <person name="Stapleton M."/>
            <person name="Yamada C."/>
            <person name="Ashburner M."/>
            <person name="Gelbart W.M."/>
            <person name="Rubin G.M."/>
            <person name="Lewis S.E."/>
        </authorList>
    </citation>
    <scope>GENOME REANNOTATION</scope>
    <scope>ALTERNATIVE SPLICING</scope>
    <source>
        <strain>Berkeley</strain>
    </source>
</reference>
<reference key="6">
    <citation type="submission" date="2003-08" db="EMBL/GenBank/DDBJ databases">
        <authorList>
            <person name="Stapleton M."/>
            <person name="Brokstein P."/>
            <person name="Hong L."/>
            <person name="Agbayani A."/>
            <person name="Carlson J.W."/>
            <person name="Champe M."/>
            <person name="Chavez C."/>
            <person name="Dorsett V."/>
            <person name="Dresnek D."/>
            <person name="Farfan D."/>
            <person name="Frise E."/>
            <person name="George R.A."/>
            <person name="Gonzalez M."/>
            <person name="Guarin H."/>
            <person name="Kronmiller B."/>
            <person name="Li P.W."/>
            <person name="Liao G."/>
            <person name="Miranda A."/>
            <person name="Mungall C.J."/>
            <person name="Nunoo J."/>
            <person name="Pacleb J.M."/>
            <person name="Paragas V."/>
            <person name="Park S."/>
            <person name="Patel S."/>
            <person name="Phouanenavong S."/>
            <person name="Wan K.H."/>
            <person name="Yu C."/>
            <person name="Lewis S.E."/>
            <person name="Rubin G.M."/>
            <person name="Celniker S.E."/>
        </authorList>
    </citation>
    <scope>NUCLEOTIDE SEQUENCE [LARGE SCALE MRNA] (ISOFORM IA)</scope>
    <source>
        <strain>Berkeley</strain>
        <tissue>Embryo</tissue>
    </source>
</reference>
<reference key="7">
    <citation type="journal article" date="1984" name="Cell">
        <title>A homologous protein-coding sequence in Drosophila homeotic genes and its conservation in other metazoans.</title>
        <authorList>
            <person name="McGinnis W."/>
            <person name="Garber R.L."/>
            <person name="Wirz J."/>
            <person name="Kuroiwa A."/>
            <person name="Gehring W.J."/>
        </authorList>
    </citation>
    <scope>NUCLEOTIDE SEQUENCE [GENOMIC DNA] OF 290-389</scope>
</reference>
<reference key="8">
    <citation type="journal article" date="1984" name="Proc. Natl. Acad. Sci. U.S.A.">
        <title>Structural relationships among genes that control development: sequence homology between the Antennapedia, Ultrabithorax, and fushi tarazu loci of Drosophila.</title>
        <authorList>
            <person name="Scott M.P."/>
            <person name="Weiner A.J."/>
        </authorList>
    </citation>
    <scope>NUCLEOTIDE SEQUENCE [GENOMIC DNA] OF 290-384</scope>
</reference>
<reference key="9">
    <citation type="journal article" date="1993" name="Genes Dev.">
        <title>The segment identity functions of Ultrabithorax are contained within its homeo domain and carboxy-terminal sequences.</title>
        <authorList>
            <person name="Chan S.K."/>
            <person name="Mann R.S."/>
        </authorList>
    </citation>
    <scope>NUCLEOTIDE SEQUENCE OF 294-355</scope>
</reference>
<reference key="10">
    <citation type="journal article" date="1987" name="EMBO J.">
        <title>The structure of the ultrabithorax promoter of Drosophila melanogaster.</title>
        <authorList>
            <person name="Saari G."/>
            <person name="Bienz M."/>
        </authorList>
    </citation>
    <scope>NUCLEOTIDE SEQUENCE [GENOMIC DNA] OF 1-8</scope>
</reference>
<reference key="11">
    <citation type="journal article" date="1991" name="EMBO J.">
        <title>Optimal DNA sequence recognition by the Ultrabithorax homeodomain of Drosophila.</title>
        <authorList>
            <person name="Ekker S.C."/>
            <person name="Young K.E."/>
            <person name="von Kessler D.P."/>
            <person name="Beachy P.A."/>
        </authorList>
    </citation>
    <scope>DNA-BINDING</scope>
</reference>
<reference key="12">
    <citation type="journal article" date="1994" name="Genetics">
        <title>Evolutionary conservation of the structure and expression of alternatively spliced Ultrabithorax isoforms from Drosophila.</title>
        <authorList>
            <person name="Bomze H.M."/>
            <person name="Lopez A.J."/>
        </authorList>
    </citation>
    <scope>ALTERNATIVE SPLICING</scope>
    <scope>TISSUE SPECIFICITY</scope>
    <source>
        <strain>Oregon-R</strain>
        <tissue>Embryo</tissue>
    </source>
</reference>
<reference key="13">
    <citation type="journal article" date="2008" name="J. Proteome Res.">
        <title>Phosphoproteome analysis of Drosophila melanogaster embryos.</title>
        <authorList>
            <person name="Zhai B."/>
            <person name="Villen J."/>
            <person name="Beausoleil S.A."/>
            <person name="Mintseris J."/>
            <person name="Gygi S.P."/>
        </authorList>
    </citation>
    <scope>PHOSPHORYLATION [LARGE SCALE ANALYSIS] AT THR-170; SER-174 AND SER-177</scope>
    <scope>IDENTIFICATION BY MASS SPECTROMETRY</scope>
    <source>
        <tissue>Embryo</tissue>
    </source>
</reference>
<reference key="14">
    <citation type="journal article" date="1999" name="Nature">
        <title>Structure of a DNA-bound Ultrabithorax-Extradenticle homeodomain complex.</title>
        <authorList>
            <person name="Passner J.M."/>
            <person name="Ryoo H.-D."/>
            <person name="Shen L."/>
            <person name="Mann R.S."/>
            <person name="Aggarwal A.K."/>
        </authorList>
    </citation>
    <scope>X-RAY CRYSTALLOGRAPHY (2.4 ANGSTROMS) OF 233-356 IN COMPLEX WITH EXD</scope>
</reference>
<proteinExistence type="evidence at protein level"/>
<keyword id="KW-0002">3D-structure</keyword>
<keyword id="KW-0010">Activator</keyword>
<keyword id="KW-0025">Alternative splicing</keyword>
<keyword id="KW-0217">Developmental protein</keyword>
<keyword id="KW-0238">DNA-binding</keyword>
<keyword id="KW-0371">Homeobox</keyword>
<keyword id="KW-0539">Nucleus</keyword>
<keyword id="KW-0597">Phosphoprotein</keyword>
<keyword id="KW-1185">Reference proteome</keyword>
<keyword id="KW-0678">Repressor</keyword>
<keyword id="KW-0804">Transcription</keyword>
<keyword id="KW-0805">Transcription regulation</keyword>
<organism>
    <name type="scientific">Drosophila melanogaster</name>
    <name type="common">Fruit fly</name>
    <dbReference type="NCBI Taxonomy" id="7227"/>
    <lineage>
        <taxon>Eukaryota</taxon>
        <taxon>Metazoa</taxon>
        <taxon>Ecdysozoa</taxon>
        <taxon>Arthropoda</taxon>
        <taxon>Hexapoda</taxon>
        <taxon>Insecta</taxon>
        <taxon>Pterygota</taxon>
        <taxon>Neoptera</taxon>
        <taxon>Endopterygota</taxon>
        <taxon>Diptera</taxon>
        <taxon>Brachycera</taxon>
        <taxon>Muscomorpha</taxon>
        <taxon>Ephydroidea</taxon>
        <taxon>Drosophilidae</taxon>
        <taxon>Drosophila</taxon>
        <taxon>Sophophora</taxon>
    </lineage>
</organism>
<accession>P83949</accession>
<accession>P02834</accession>
<accession>Q9TX83</accession>
<accession>Q9VER4</accession>
<accession>Q9VER5</accession>
<dbReference type="EMBL" id="X05723">
    <property type="protein sequence ID" value="CAA29194.1"/>
    <property type="molecule type" value="Genomic_DNA"/>
</dbReference>
<dbReference type="EMBL" id="X05724">
    <property type="protein sequence ID" value="CAA29194.1"/>
    <property type="status" value="JOINED"/>
    <property type="molecule type" value="Genomic_DNA"/>
</dbReference>
<dbReference type="EMBL" id="X05725">
    <property type="protein sequence ID" value="CAA29194.1"/>
    <property type="status" value="JOINED"/>
    <property type="molecule type" value="Genomic_DNA"/>
</dbReference>
<dbReference type="EMBL" id="X05727">
    <property type="protein sequence ID" value="CAA29194.1"/>
    <property type="status" value="JOINED"/>
    <property type="molecule type" value="Genomic_DNA"/>
</dbReference>
<dbReference type="EMBL" id="X76210">
    <property type="protein sequence ID" value="CAA53803.1"/>
    <property type="molecule type" value="mRNA"/>
</dbReference>
<dbReference type="EMBL" id="U31961">
    <property type="protein sequence ID" value="AAA84412.1"/>
    <property type="molecule type" value="Genomic_DNA"/>
</dbReference>
<dbReference type="EMBL" id="U31961">
    <property type="protein sequence ID" value="AAA84411.1"/>
    <property type="molecule type" value="Genomic_DNA"/>
</dbReference>
<dbReference type="EMBL" id="U31961">
    <property type="protein sequence ID" value="AAA84410.1"/>
    <property type="molecule type" value="Genomic_DNA"/>
</dbReference>
<dbReference type="EMBL" id="U31961">
    <property type="protein sequence ID" value="AAA84409.1"/>
    <property type="molecule type" value="Genomic_DNA"/>
</dbReference>
<dbReference type="EMBL" id="U31961">
    <property type="protein sequence ID" value="AAA84408.1"/>
    <property type="molecule type" value="Genomic_DNA"/>
</dbReference>
<dbReference type="EMBL" id="AE014297">
    <property type="protein sequence ID" value="AAF55355.2"/>
    <property type="molecule type" value="Genomic_DNA"/>
</dbReference>
<dbReference type="EMBL" id="AE014297">
    <property type="protein sequence ID" value="AAF55356.1"/>
    <property type="molecule type" value="Genomic_DNA"/>
</dbReference>
<dbReference type="EMBL" id="AE014297">
    <property type="protein sequence ID" value="AAN13717.1"/>
    <property type="molecule type" value="Genomic_DNA"/>
</dbReference>
<dbReference type="EMBL" id="AE014297">
    <property type="protein sequence ID" value="AAN13718.1"/>
    <property type="molecule type" value="Genomic_DNA"/>
</dbReference>
<dbReference type="EMBL" id="AE014297">
    <property type="protein sequence ID" value="AAN13719.1"/>
    <property type="molecule type" value="Genomic_DNA"/>
</dbReference>
<dbReference type="EMBL" id="AE014297">
    <property type="protein sequence ID" value="AAS65158.1"/>
    <property type="molecule type" value="Genomic_DNA"/>
</dbReference>
<dbReference type="EMBL" id="BT010241">
    <property type="protein sequence ID" value="AAQ23559.1"/>
    <property type="molecule type" value="mRNA"/>
</dbReference>
<dbReference type="EMBL" id="K01963">
    <property type="protein sequence ID" value="AAA29008.1"/>
    <property type="status" value="ALT_SEQ"/>
    <property type="molecule type" value="Genomic_DNA"/>
</dbReference>
<dbReference type="EMBL" id="K01959">
    <property type="protein sequence ID" value="AAA28615.1"/>
    <property type="status" value="ALT_SEQ"/>
    <property type="molecule type" value="Genomic_DNA"/>
</dbReference>
<dbReference type="EMBL" id="X05427">
    <property type="protein sequence ID" value="CAA29009.1"/>
    <property type="molecule type" value="Genomic_DNA"/>
</dbReference>
<dbReference type="PIR" id="B27867">
    <property type="entry name" value="B27867"/>
</dbReference>
<dbReference type="PIR" id="D26995">
    <property type="entry name" value="D26995"/>
</dbReference>
<dbReference type="RefSeq" id="NP_536748.1">
    <molecule id="P83949-5"/>
    <property type="nucleotide sequence ID" value="NM_080500.4"/>
</dbReference>
<dbReference type="RefSeq" id="NP_536752.1">
    <molecule id="P83949-1"/>
    <property type="nucleotide sequence ID" value="NM_080504.4"/>
</dbReference>
<dbReference type="RefSeq" id="NP_732171.1">
    <molecule id="P83949-3"/>
    <property type="nucleotide sequence ID" value="NM_169728.3"/>
</dbReference>
<dbReference type="RefSeq" id="NP_732172.1">
    <molecule id="P83949-2"/>
    <property type="nucleotide sequence ID" value="NM_169729.3"/>
</dbReference>
<dbReference type="RefSeq" id="NP_732173.1">
    <molecule id="P83949-4"/>
    <property type="nucleotide sequence ID" value="NM_169730.3"/>
</dbReference>
<dbReference type="RefSeq" id="NP_996219.1">
    <molecule id="P83949-6"/>
    <property type="nucleotide sequence ID" value="NM_206497.3"/>
</dbReference>
<dbReference type="PDB" id="1B8I">
    <property type="method" value="X-ray"/>
    <property type="resolution" value="2.40 A"/>
    <property type="chains" value="A=233-356"/>
</dbReference>
<dbReference type="PDB" id="4CYC">
    <property type="method" value="X-ray"/>
    <property type="resolution" value="2.36 A"/>
    <property type="chains" value="A=233-367"/>
</dbReference>
<dbReference type="PDB" id="4UUS">
    <property type="method" value="X-ray"/>
    <property type="resolution" value="2.55 A"/>
    <property type="chains" value="A/E=292-367"/>
</dbReference>
<dbReference type="PDB" id="4UUT">
    <property type="method" value="X-ray"/>
    <property type="resolution" value="2.80 A"/>
    <property type="chains" value="A=233-367"/>
</dbReference>
<dbReference type="PDB" id="8F36">
    <property type="method" value="NMR"/>
    <property type="chains" value="A=295-354"/>
</dbReference>
<dbReference type="PDBsum" id="1B8I"/>
<dbReference type="PDBsum" id="4CYC"/>
<dbReference type="PDBsum" id="4UUS"/>
<dbReference type="PDBsum" id="4UUT"/>
<dbReference type="PDBsum" id="8F36"/>
<dbReference type="SMR" id="P83949"/>
<dbReference type="BioGRID" id="67078">
    <property type="interactions" value="259"/>
</dbReference>
<dbReference type="DIP" id="DIP-33048N"/>
<dbReference type="FunCoup" id="P83949">
    <property type="interactions" value="26"/>
</dbReference>
<dbReference type="IntAct" id="P83949">
    <property type="interactions" value="28"/>
</dbReference>
<dbReference type="MINT" id="P83949"/>
<dbReference type="STRING" id="7227.FBpp0082793"/>
<dbReference type="iPTMnet" id="P83949"/>
<dbReference type="PaxDb" id="7227-FBpp0082793"/>
<dbReference type="DNASU" id="42034"/>
<dbReference type="EnsemblMetazoa" id="FBtr0083347">
    <molecule id="P83949-1"/>
    <property type="protein sequence ID" value="FBpp0082793"/>
    <property type="gene ID" value="FBgn0003944"/>
</dbReference>
<dbReference type="EnsemblMetazoa" id="FBtr0083348">
    <molecule id="P83949-5"/>
    <property type="protein sequence ID" value="FBpp0082794"/>
    <property type="gene ID" value="FBgn0003944"/>
</dbReference>
<dbReference type="EnsemblMetazoa" id="FBtr0083349">
    <molecule id="P83949-4"/>
    <property type="protein sequence ID" value="FBpp0082795"/>
    <property type="gene ID" value="FBgn0003944"/>
</dbReference>
<dbReference type="EnsemblMetazoa" id="FBtr0083350">
    <molecule id="P83949-3"/>
    <property type="protein sequence ID" value="FBpp0082796"/>
    <property type="gene ID" value="FBgn0003944"/>
</dbReference>
<dbReference type="EnsemblMetazoa" id="FBtr0083351">
    <molecule id="P83949-2"/>
    <property type="protein sequence ID" value="FBpp0082797"/>
    <property type="gene ID" value="FBgn0003944"/>
</dbReference>
<dbReference type="EnsemblMetazoa" id="FBtr0083352">
    <molecule id="P83949-6"/>
    <property type="protein sequence ID" value="FBpp0089155"/>
    <property type="gene ID" value="FBgn0003944"/>
</dbReference>
<dbReference type="GeneID" id="42034"/>
<dbReference type="KEGG" id="dme:Dmel_CG10388"/>
<dbReference type="AGR" id="FB:FBgn0003944"/>
<dbReference type="CTD" id="42034"/>
<dbReference type="FlyBase" id="FBgn0003944">
    <property type="gene designation" value="Ubx"/>
</dbReference>
<dbReference type="VEuPathDB" id="VectorBase:FBgn0003944"/>
<dbReference type="eggNOG" id="KOG0489">
    <property type="taxonomic scope" value="Eukaryota"/>
</dbReference>
<dbReference type="InParanoid" id="P83949"/>
<dbReference type="OMA" id="PDWIGAN"/>
<dbReference type="OrthoDB" id="6159439at2759"/>
<dbReference type="PhylomeDB" id="P83949"/>
<dbReference type="SignaLink" id="P83949"/>
<dbReference type="BioGRID-ORCS" id="42034">
    <property type="hits" value="0 hits in 1 CRISPR screen"/>
</dbReference>
<dbReference type="ChiTaRS" id="Ubx">
    <property type="organism name" value="fly"/>
</dbReference>
<dbReference type="EvolutionaryTrace" id="P83949"/>
<dbReference type="GenomeRNAi" id="42034"/>
<dbReference type="PRO" id="PR:P83949"/>
<dbReference type="Proteomes" id="UP000000803">
    <property type="component" value="Chromosome 3R"/>
</dbReference>
<dbReference type="Bgee" id="FBgn0003944">
    <property type="expression patterns" value="Expressed in epithelial cell in haltere and 104 other cell types or tissues"/>
</dbReference>
<dbReference type="ExpressionAtlas" id="P83949">
    <property type="expression patterns" value="baseline and differential"/>
</dbReference>
<dbReference type="GO" id="GO:0005634">
    <property type="term" value="C:nucleus"/>
    <property type="evidence" value="ECO:0000314"/>
    <property type="project" value="UniProtKB"/>
</dbReference>
<dbReference type="GO" id="GO:0005704">
    <property type="term" value="C:polytene chromosome band"/>
    <property type="evidence" value="ECO:0000314"/>
    <property type="project" value="FlyBase"/>
</dbReference>
<dbReference type="GO" id="GO:0032993">
    <property type="term" value="C:protein-DNA complex"/>
    <property type="evidence" value="ECO:0000315"/>
    <property type="project" value="CAFA"/>
</dbReference>
<dbReference type="GO" id="GO:0005667">
    <property type="term" value="C:transcription regulator complex"/>
    <property type="evidence" value="ECO:0000315"/>
    <property type="project" value="CAFA"/>
</dbReference>
<dbReference type="GO" id="GO:0017053">
    <property type="term" value="C:transcription repressor complex"/>
    <property type="evidence" value="ECO:0000315"/>
    <property type="project" value="CAFA"/>
</dbReference>
<dbReference type="GO" id="GO:0000987">
    <property type="term" value="F:cis-regulatory region sequence-specific DNA binding"/>
    <property type="evidence" value="ECO:0000315"/>
    <property type="project" value="CAFA"/>
</dbReference>
<dbReference type="GO" id="GO:0003677">
    <property type="term" value="F:DNA binding"/>
    <property type="evidence" value="ECO:0000314"/>
    <property type="project" value="UniProtKB"/>
</dbReference>
<dbReference type="GO" id="GO:0000981">
    <property type="term" value="F:DNA-binding transcription factor activity, RNA polymerase II-specific"/>
    <property type="evidence" value="ECO:0000318"/>
    <property type="project" value="GO_Central"/>
</dbReference>
<dbReference type="GO" id="GO:0019904">
    <property type="term" value="F:protein domain specific binding"/>
    <property type="evidence" value="ECO:0000353"/>
    <property type="project" value="UniProtKB"/>
</dbReference>
<dbReference type="GO" id="GO:0000978">
    <property type="term" value="F:RNA polymerase II cis-regulatory region sequence-specific DNA binding"/>
    <property type="evidence" value="ECO:0000314"/>
    <property type="project" value="FlyBase"/>
</dbReference>
<dbReference type="GO" id="GO:0043565">
    <property type="term" value="F:sequence-specific DNA binding"/>
    <property type="evidence" value="ECO:0000314"/>
    <property type="project" value="FlyBase"/>
</dbReference>
<dbReference type="GO" id="GO:0001221">
    <property type="term" value="F:transcription coregulator binding"/>
    <property type="evidence" value="ECO:0000353"/>
    <property type="project" value="CAFA"/>
</dbReference>
<dbReference type="GO" id="GO:0061327">
    <property type="term" value="P:anterior Malpighian tubule development"/>
    <property type="evidence" value="ECO:0000315"/>
    <property type="project" value="FlyBase"/>
</dbReference>
<dbReference type="GO" id="GO:0009952">
    <property type="term" value="P:anterior/posterior pattern specification"/>
    <property type="evidence" value="ECO:0000318"/>
    <property type="project" value="GO_Central"/>
</dbReference>
<dbReference type="GO" id="GO:0001709">
    <property type="term" value="P:cell fate determination"/>
    <property type="evidence" value="ECO:0000315"/>
    <property type="project" value="FlyBase"/>
</dbReference>
<dbReference type="GO" id="GO:0035052">
    <property type="term" value="P:dorsal vessel aortic cell fate commitment"/>
    <property type="evidence" value="ECO:0000304"/>
    <property type="project" value="FlyBase"/>
</dbReference>
<dbReference type="GO" id="GO:0001706">
    <property type="term" value="P:endoderm formation"/>
    <property type="evidence" value="ECO:0000304"/>
    <property type="project" value="FlyBase"/>
</dbReference>
<dbReference type="GO" id="GO:0007482">
    <property type="term" value="P:haltere development"/>
    <property type="evidence" value="ECO:0000315"/>
    <property type="project" value="FlyBase"/>
</dbReference>
<dbReference type="GO" id="GO:0007507">
    <property type="term" value="P:heart development"/>
    <property type="evidence" value="ECO:0000315"/>
    <property type="project" value="FlyBase"/>
</dbReference>
<dbReference type="GO" id="GO:0007480">
    <property type="term" value="P:imaginal disc-derived leg morphogenesis"/>
    <property type="evidence" value="ECO:0000315"/>
    <property type="project" value="FlyBase"/>
</dbReference>
<dbReference type="GO" id="GO:0007501">
    <property type="term" value="P:mesodermal cell fate specification"/>
    <property type="evidence" value="ECO:0000315"/>
    <property type="project" value="FlyBase"/>
</dbReference>
<dbReference type="GO" id="GO:0007494">
    <property type="term" value="P:midgut development"/>
    <property type="evidence" value="ECO:0000304"/>
    <property type="project" value="FlyBase"/>
</dbReference>
<dbReference type="GO" id="GO:0042694">
    <property type="term" value="P:muscle cell fate specification"/>
    <property type="evidence" value="ECO:0000315"/>
    <property type="project" value="FlyBase"/>
</dbReference>
<dbReference type="GO" id="GO:0045892">
    <property type="term" value="P:negative regulation of DNA-templated transcription"/>
    <property type="evidence" value="ECO:0000315"/>
    <property type="project" value="CAFA"/>
</dbReference>
<dbReference type="GO" id="GO:0000122">
    <property type="term" value="P:negative regulation of transcription by RNA polymerase II"/>
    <property type="evidence" value="ECO:0000314"/>
    <property type="project" value="FlyBase"/>
</dbReference>
<dbReference type="GO" id="GO:0007424">
    <property type="term" value="P:open tracheal system development"/>
    <property type="evidence" value="ECO:0000315"/>
    <property type="project" value="FlyBase"/>
</dbReference>
<dbReference type="GO" id="GO:0045893">
    <property type="term" value="P:positive regulation of DNA-templated transcription"/>
    <property type="evidence" value="ECO:0000315"/>
    <property type="project" value="CAFA"/>
</dbReference>
<dbReference type="GO" id="GO:0048636">
    <property type="term" value="P:positive regulation of muscle organ development"/>
    <property type="evidence" value="ECO:0000315"/>
    <property type="project" value="FlyBase"/>
</dbReference>
<dbReference type="GO" id="GO:0042659">
    <property type="term" value="P:regulation of cell fate specification"/>
    <property type="evidence" value="ECO:0000315"/>
    <property type="project" value="FlyBase"/>
</dbReference>
<dbReference type="GO" id="GO:0006355">
    <property type="term" value="P:regulation of DNA-templated transcription"/>
    <property type="evidence" value="ECO:0000314"/>
    <property type="project" value="UniProtKB"/>
</dbReference>
<dbReference type="GO" id="GO:0045570">
    <property type="term" value="P:regulation of imaginal disc growth"/>
    <property type="evidence" value="ECO:0000315"/>
    <property type="project" value="FlyBase"/>
</dbReference>
<dbReference type="GO" id="GO:0007525">
    <property type="term" value="P:somatic muscle development"/>
    <property type="evidence" value="ECO:0000315"/>
    <property type="project" value="FlyBase"/>
</dbReference>
<dbReference type="GO" id="GO:0010092">
    <property type="term" value="P:specification of animal organ identity"/>
    <property type="evidence" value="ECO:0000315"/>
    <property type="project" value="FlyBase"/>
</dbReference>
<dbReference type="GO" id="GO:0007384">
    <property type="term" value="P:specification of segmental identity, thorax"/>
    <property type="evidence" value="ECO:0000315"/>
    <property type="project" value="FlyBase"/>
</dbReference>
<dbReference type="CDD" id="cd00086">
    <property type="entry name" value="homeodomain"/>
    <property type="match status" value="1"/>
</dbReference>
<dbReference type="DisProt" id="DP00623"/>
<dbReference type="Gene3D" id="1.10.10.60">
    <property type="entry name" value="Homeodomain-like"/>
    <property type="match status" value="1"/>
</dbReference>
<dbReference type="InterPro" id="IPR050296">
    <property type="entry name" value="Antp_homeobox"/>
</dbReference>
<dbReference type="InterPro" id="IPR001356">
    <property type="entry name" value="HD"/>
</dbReference>
<dbReference type="InterPro" id="IPR020479">
    <property type="entry name" value="HD_metazoa"/>
</dbReference>
<dbReference type="InterPro" id="IPR001827">
    <property type="entry name" value="Homeobox_Antennapedia_CS"/>
</dbReference>
<dbReference type="InterPro" id="IPR017970">
    <property type="entry name" value="Homeobox_CS"/>
</dbReference>
<dbReference type="InterPro" id="IPR009057">
    <property type="entry name" value="Homeodomain-like_sf"/>
</dbReference>
<dbReference type="PANTHER" id="PTHR45659">
    <property type="entry name" value="HOMEOBOX PROTEIN HOX"/>
    <property type="match status" value="1"/>
</dbReference>
<dbReference type="PANTHER" id="PTHR45659:SF21">
    <property type="entry name" value="HOMEOTIC PROTEIN ULTRABITHORAX"/>
    <property type="match status" value="1"/>
</dbReference>
<dbReference type="Pfam" id="PF00046">
    <property type="entry name" value="Homeodomain"/>
    <property type="match status" value="1"/>
</dbReference>
<dbReference type="PRINTS" id="PR00024">
    <property type="entry name" value="HOMEOBOX"/>
</dbReference>
<dbReference type="SMART" id="SM00389">
    <property type="entry name" value="HOX"/>
    <property type="match status" value="1"/>
</dbReference>
<dbReference type="SUPFAM" id="SSF46689">
    <property type="entry name" value="Homeodomain-like"/>
    <property type="match status" value="1"/>
</dbReference>
<dbReference type="PROSITE" id="PS00032">
    <property type="entry name" value="ANTENNAPEDIA"/>
    <property type="match status" value="1"/>
</dbReference>
<dbReference type="PROSITE" id="PS00027">
    <property type="entry name" value="HOMEOBOX_1"/>
    <property type="match status" value="1"/>
</dbReference>
<dbReference type="PROSITE" id="PS50071">
    <property type="entry name" value="HOMEOBOX_2"/>
    <property type="match status" value="1"/>
</dbReference>
<protein>
    <recommendedName>
        <fullName>Homeotic protein ultrabithorax</fullName>
    </recommendedName>
</protein>
<comment type="function">
    <text>Sequence-specific transcription factor which is part of a developmental regulatory system that provides cells with specific positional identities on the anterior-posterior axis. Binds the consensus region 5'-TTAAT[GT][GA]-3'. This homeotic protein controls development of the cells in the posterior thoracic and first abdominal segments. It activates the synthesis of the decapentaplegic (DPP) growth factor.</text>
</comment>
<comment type="interaction">
    <interactant intactId="EBI-202590">
        <id>P83949</id>
    </interactant>
    <interactant intactId="EBI-188244">
        <id>Q06453</id>
        <label>al</label>
    </interactant>
    <organismsDiffer>false</organismsDiffer>
    <experiments>3</experiments>
</comment>
<comment type="interaction">
    <interactant intactId="EBI-202590">
        <id>P83949</id>
    </interactant>
    <interactant intactId="EBI-137965">
        <id>Q7K4N3</id>
        <label>Cbp80</label>
    </interactant>
    <organismsDiffer>false</organismsDiffer>
    <experiments>3</experiments>
</comment>
<comment type="interaction">
    <interactant intactId="EBI-202590">
        <id>P83949</id>
    </interactant>
    <interactant intactId="EBI-101537">
        <id>P40427</id>
        <label>exd</label>
    </interactant>
    <organismsDiffer>false</organismsDiffer>
    <experiments>5</experiments>
</comment>
<comment type="interaction">
    <interactant intactId="EBI-202590">
        <id>P83949</id>
    </interactant>
    <interactant intactId="EBI-123011">
        <id>P14003</id>
        <label>hry</label>
    </interactant>
    <organismsDiffer>false</organismsDiffer>
    <experiments>3</experiments>
</comment>
<comment type="interaction">
    <interactant intactId="EBI-202571">
        <id>P83949-1</id>
    </interactant>
    <interactant intactId="EBI-443968">
        <id>Q9TW27</id>
        <label>DIP1</label>
    </interactant>
    <organismsDiffer>false</organismsDiffer>
    <experiments>7</experiments>
</comment>
<comment type="subcellular location">
    <subcellularLocation>
        <location>Nucleus</location>
    </subcellularLocation>
</comment>
<comment type="alternative products">
    <event type="alternative splicing"/>
    <isoform>
        <id>P83949-1</id>
        <id>P02834-1</id>
        <name>IB</name>
        <name>A</name>
        <sequence type="displayed"/>
    </isoform>
    <isoform>
        <id>P83949-2</id>
        <id>P02834-2</id>
        <name>IA</name>
        <name>E</name>
        <sequence type="described" ref="VSP_002405"/>
    </isoform>
    <isoform>
        <id>P83949-3</id>
        <id>P02834-3</id>
        <name>IIA</name>
        <name>D</name>
        <sequence type="described" ref="VSP_002406"/>
    </isoform>
    <isoform>
        <id>P83949-4</id>
        <id>P02834-4</id>
        <name>IIB</name>
        <name>C</name>
        <sequence type="described" ref="VSP_002408"/>
    </isoform>
    <isoform>
        <id>P83949-5</id>
        <id>P02834-5</id>
        <name>IVA</name>
        <name>B</name>
        <sequence type="described" ref="VSP_002407"/>
    </isoform>
    <isoform>
        <id>P83949-6</id>
        <id>P02834-6</id>
        <name>IVB</name>
        <name>F</name>
        <sequence type="described" ref="VSP_002409"/>
    </isoform>
</comment>
<comment type="tissue specificity">
    <text evidence="5">In the embryo, expression is seen in the epidermis, somatic and visceral mesoderm, and the peripheral and central nervous system.</text>
</comment>
<comment type="domain">
    <text evidence="1">The QA motif is able to mediate transcriptional repression.</text>
</comment>
<comment type="similarity">
    <text evidence="8">Belongs to the Antp homeobox family.</text>
</comment>
<name>UBX_DROME</name>
<gene>
    <name type="primary">Ubx</name>
    <name type="ORF">CG10388</name>
</gene>
<evidence type="ECO:0000250" key="1"/>
<evidence type="ECO:0000255" key="2">
    <source>
        <dbReference type="PROSITE-ProRule" id="PRU00108"/>
    </source>
</evidence>
<evidence type="ECO:0000256" key="3">
    <source>
        <dbReference type="SAM" id="MobiDB-lite"/>
    </source>
</evidence>
<evidence type="ECO:0000269" key="4">
    <source>
    </source>
</evidence>
<evidence type="ECO:0000269" key="5">
    <source>
    </source>
</evidence>
<evidence type="ECO:0000303" key="6">
    <source>
    </source>
</evidence>
<evidence type="ECO:0000303" key="7">
    <source ref="6"/>
</evidence>
<evidence type="ECO:0000305" key="8"/>
<evidence type="ECO:0007829" key="9">
    <source>
        <dbReference type="PDB" id="4CYC"/>
    </source>
</evidence>
<feature type="chain" id="PRO_0000200268" description="Homeotic protein ultrabithorax">
    <location>
        <begin position="1"/>
        <end position="389"/>
    </location>
</feature>
<feature type="DNA-binding region" description="Homeobox" evidence="2">
    <location>
        <begin position="295"/>
        <end position="354"/>
    </location>
</feature>
<feature type="region of interest" description="Disordered" evidence="3">
    <location>
        <begin position="138"/>
        <end position="189"/>
    </location>
</feature>
<feature type="short sequence motif" description="Antp-type hexapeptide">
    <location>
        <begin position="239"/>
        <end position="244"/>
    </location>
</feature>
<feature type="short sequence motif" description="QA">
    <location>
        <begin position="368"/>
        <end position="383"/>
    </location>
</feature>
<feature type="compositionally biased region" description="Low complexity" evidence="3">
    <location>
        <begin position="138"/>
        <end position="150"/>
    </location>
</feature>
<feature type="modified residue" description="Phosphothreonine" evidence="4">
    <location>
        <position position="170"/>
    </location>
</feature>
<feature type="modified residue" description="Phosphoserine" evidence="4">
    <location>
        <position position="174"/>
    </location>
</feature>
<feature type="modified residue" description="Phosphoserine" evidence="4">
    <location>
        <position position="177"/>
    </location>
</feature>
<feature type="splice variant" id="VSP_002407" description="In isoform IVA." evidence="6">
    <location>
        <begin position="248"/>
        <end position="290"/>
    </location>
</feature>
<feature type="splice variant" id="VSP_002406" description="In isoform IIA." evidence="6">
    <location>
        <begin position="248"/>
        <end position="273"/>
    </location>
</feature>
<feature type="splice variant" id="VSP_002405" description="In isoform IA." evidence="6 7">
    <location>
        <begin position="248"/>
        <end position="256"/>
    </location>
</feature>
<feature type="splice variant" id="VSP_002409" description="In isoform IVB." evidence="6">
    <location>
        <begin position="257"/>
        <end position="290"/>
    </location>
</feature>
<feature type="splice variant" id="VSP_002408" description="In isoform IIB." evidence="6">
    <location>
        <begin position="258"/>
        <end position="274"/>
    </location>
</feature>
<feature type="sequence conflict" description="In Ref. 3; AAA84412/AAA84411/AAA84410/AAA84409/AAA84408." evidence="8" ref="3">
    <original>N</original>
    <variation>Y</variation>
    <location>
        <position position="75"/>
    </location>
</feature>
<feature type="sequence conflict" description="In Ref. 7; AAA28615." evidence="8" ref="7">
    <original>H</original>
    <variation>Y</variation>
    <location>
        <position position="330"/>
    </location>
</feature>
<feature type="sequence conflict" description="In Ref. 7; AAA28615." evidence="8" ref="7">
    <original>K</original>
    <variation>E</variation>
    <location>
        <position position="340"/>
    </location>
</feature>
<feature type="helix" evidence="9">
    <location>
        <begin position="241"/>
        <end position="243"/>
    </location>
</feature>
<feature type="helix" evidence="9">
    <location>
        <begin position="304"/>
        <end position="316"/>
    </location>
</feature>
<feature type="helix" evidence="9">
    <location>
        <begin position="322"/>
        <end position="332"/>
    </location>
</feature>
<feature type="helix" evidence="9">
    <location>
        <begin position="336"/>
        <end position="355"/>
    </location>
</feature>
<sequence length="389" mass="40040">MNSYFEQASGFYGHPHQATGMAMGSGGHHDQTASAAAAAYRGFPLSLGMSPYANHHLQRTTQDSPYDASITAACNKIYGDGAGAYKQDCLNIKADAVNGYKDIWNTGGSNGGGGGGGGGGGGGAGGTGGAGNANGGNAANANGQNNPAGGMPVRPSACTPDSRVGGYLDTSGGSPVSHRGGSAGGNVSVSGGNGNAGGVQSGVGVAGAGTAWNANCTISGAAAQTAAASSLHQASNHTFYPWMAIAGECPEDPTKSKIRSDLTQYGGISTDMGKRYSESLAGSLLPDWLGTNGLRRRGRQTYTRYQTLELEKEFHTNHYLTRRRRIEMAHALCLTERQIKIWFQNRRMKLKKEIQAIKELNEQEKQAQAQKAAAAAAAAAAVQGGHLDQ</sequence>